<protein>
    <recommendedName>
        <fullName evidence="1">Probable L-ascorbate-6-phosphate lactonase UlaG</fullName>
        <ecNumber evidence="1">3.1.1.-</ecNumber>
    </recommendedName>
    <alternativeName>
        <fullName evidence="1">L-ascorbate utilization protein G</fullName>
    </alternativeName>
</protein>
<keyword id="KW-0963">Cytoplasm</keyword>
<keyword id="KW-0378">Hydrolase</keyword>
<comment type="function">
    <text evidence="1">Probably catalyzes the hydrolysis of L-ascorbate-6-P into 3-keto-L-gulonate-6-P. Is essential for L-ascorbate utilization under anaerobic conditions.</text>
</comment>
<comment type="catalytic activity">
    <reaction evidence="1">
        <text>L-ascorbate 6-phosphate + H2O = 3-dehydro-L-gulonate 6-phosphate</text>
        <dbReference type="Rhea" id="RHEA:28803"/>
        <dbReference type="ChEBI" id="CHEBI:15377"/>
        <dbReference type="ChEBI" id="CHEBI:58774"/>
        <dbReference type="ChEBI" id="CHEBI:61698"/>
    </reaction>
</comment>
<comment type="cofactor">
    <cofactor evidence="1">
        <name>a divalent metal cation</name>
        <dbReference type="ChEBI" id="CHEBI:60240"/>
    </cofactor>
</comment>
<comment type="pathway">
    <text evidence="1">Cofactor degradation; L-ascorbate degradation; D-xylulose 5-phosphate from L-ascorbate: step 1/4.</text>
</comment>
<comment type="subcellular location">
    <subcellularLocation>
        <location evidence="1">Cytoplasm</location>
    </subcellularLocation>
</comment>
<comment type="induction">
    <text evidence="1">Induced by L-ascorbate. Repressed by UlaR.</text>
</comment>
<comment type="similarity">
    <text evidence="1">Belongs to the UlaG family.</text>
</comment>
<gene>
    <name evidence="1" type="primary">ulaG</name>
    <name type="ordered locus">SEN4148</name>
</gene>
<proteinExistence type="inferred from homology"/>
<feature type="chain" id="PRO_1000140102" description="Probable L-ascorbate-6-phosphate lactonase UlaG">
    <location>
        <begin position="1"/>
        <end position="354"/>
    </location>
</feature>
<sequence>MSKVQSITRESWILSTFPEWGSWLNEEIEQEQVAPGTFAMWWLGCTGIWLKSEGGTNVCVDFWCGTGKQSHGNPLMKTGHQMQRMAGVKKLQPNLRTTPFVLDPFAIRQIDAVLATHDHNDHIDVNVAAAVMQNCADDVPFIGPQTCVDLWVGWGVPKERCIVVKPGDVVKVKDIEIHALDAFDRTALITLPADQKAAGVLPDGMDVRAVNYLFKTPGGNLYHSGDSHYSNYYAKHGNEHQIDVALGSYGENPRGITDKMTSADILRMAESLNTKVVIPFHHDIWSNFQADPQEIRVLWEMKKDRLKYGFKPFIWQVGGKFTWPLDKDNFEYHYPRGFDDCFTIEPDLPFKSFL</sequence>
<reference key="1">
    <citation type="journal article" date="2008" name="Genome Res.">
        <title>Comparative genome analysis of Salmonella enteritidis PT4 and Salmonella gallinarum 287/91 provides insights into evolutionary and host adaptation pathways.</title>
        <authorList>
            <person name="Thomson N.R."/>
            <person name="Clayton D.J."/>
            <person name="Windhorst D."/>
            <person name="Vernikos G."/>
            <person name="Davidson S."/>
            <person name="Churcher C."/>
            <person name="Quail M.A."/>
            <person name="Stevens M."/>
            <person name="Jones M.A."/>
            <person name="Watson M."/>
            <person name="Barron A."/>
            <person name="Layton A."/>
            <person name="Pickard D."/>
            <person name="Kingsley R.A."/>
            <person name="Bignell A."/>
            <person name="Clark L."/>
            <person name="Harris B."/>
            <person name="Ormond D."/>
            <person name="Abdellah Z."/>
            <person name="Brooks K."/>
            <person name="Cherevach I."/>
            <person name="Chillingworth T."/>
            <person name="Woodward J."/>
            <person name="Norberczak H."/>
            <person name="Lord A."/>
            <person name="Arrowsmith C."/>
            <person name="Jagels K."/>
            <person name="Moule S."/>
            <person name="Mungall K."/>
            <person name="Saunders M."/>
            <person name="Whitehead S."/>
            <person name="Chabalgoity J.A."/>
            <person name="Maskell D."/>
            <person name="Humphreys T."/>
            <person name="Roberts M."/>
            <person name="Barrow P.A."/>
            <person name="Dougan G."/>
            <person name="Parkhill J."/>
        </authorList>
    </citation>
    <scope>NUCLEOTIDE SEQUENCE [LARGE SCALE GENOMIC DNA]</scope>
    <source>
        <strain>P125109</strain>
    </source>
</reference>
<accession>B5R0Q9</accession>
<evidence type="ECO:0000255" key="1">
    <source>
        <dbReference type="HAMAP-Rule" id="MF_01266"/>
    </source>
</evidence>
<organism>
    <name type="scientific">Salmonella enteritidis PT4 (strain P125109)</name>
    <dbReference type="NCBI Taxonomy" id="550537"/>
    <lineage>
        <taxon>Bacteria</taxon>
        <taxon>Pseudomonadati</taxon>
        <taxon>Pseudomonadota</taxon>
        <taxon>Gammaproteobacteria</taxon>
        <taxon>Enterobacterales</taxon>
        <taxon>Enterobacteriaceae</taxon>
        <taxon>Salmonella</taxon>
    </lineage>
</organism>
<dbReference type="EC" id="3.1.1.-" evidence="1"/>
<dbReference type="EMBL" id="AM933172">
    <property type="protein sequence ID" value="CAR35708.1"/>
    <property type="molecule type" value="Genomic_DNA"/>
</dbReference>
<dbReference type="RefSeq" id="WP_000049161.1">
    <property type="nucleotide sequence ID" value="NC_011294.1"/>
</dbReference>
<dbReference type="SMR" id="B5R0Q9"/>
<dbReference type="GeneID" id="66758606"/>
<dbReference type="KEGG" id="set:SEN4148"/>
<dbReference type="HOGENOM" id="CLU_074775_0_0_6"/>
<dbReference type="UniPathway" id="UPA00263">
    <property type="reaction ID" value="UER00377"/>
</dbReference>
<dbReference type="Proteomes" id="UP000000613">
    <property type="component" value="Chromosome"/>
</dbReference>
<dbReference type="GO" id="GO:0005737">
    <property type="term" value="C:cytoplasm"/>
    <property type="evidence" value="ECO:0007669"/>
    <property type="project" value="UniProtKB-SubCell"/>
</dbReference>
<dbReference type="GO" id="GO:0035460">
    <property type="term" value="F:L-ascorbate 6-phosphate lactonase activity"/>
    <property type="evidence" value="ECO:0007669"/>
    <property type="project" value="InterPro"/>
</dbReference>
<dbReference type="GO" id="GO:0030145">
    <property type="term" value="F:manganese ion binding"/>
    <property type="evidence" value="ECO:0007669"/>
    <property type="project" value="InterPro"/>
</dbReference>
<dbReference type="GO" id="GO:0019854">
    <property type="term" value="P:L-ascorbic acid catabolic process"/>
    <property type="evidence" value="ECO:0007669"/>
    <property type="project" value="UniProtKB-UniRule"/>
</dbReference>
<dbReference type="CDD" id="cd16284">
    <property type="entry name" value="UlaG-like_MBL-fold"/>
    <property type="match status" value="1"/>
</dbReference>
<dbReference type="FunFam" id="3.60.15.10:FF:000004">
    <property type="entry name" value="Probable L-ascorbate-6-phosphate lactonase UlaG"/>
    <property type="match status" value="1"/>
</dbReference>
<dbReference type="Gene3D" id="3.60.15.10">
    <property type="entry name" value="Ribonuclease Z/Hydroxyacylglutathione hydrolase-like"/>
    <property type="match status" value="1"/>
</dbReference>
<dbReference type="HAMAP" id="MF_01266">
    <property type="entry name" value="UlaG"/>
    <property type="match status" value="1"/>
</dbReference>
<dbReference type="InterPro" id="IPR023951">
    <property type="entry name" value="L-ascorbate_6P_UlaG"/>
</dbReference>
<dbReference type="InterPro" id="IPR001279">
    <property type="entry name" value="Metallo-B-lactamas"/>
</dbReference>
<dbReference type="InterPro" id="IPR036866">
    <property type="entry name" value="RibonucZ/Hydroxyglut_hydro"/>
</dbReference>
<dbReference type="InterPro" id="IPR048021">
    <property type="entry name" value="UlaG-like_MBL-fold"/>
</dbReference>
<dbReference type="InterPro" id="IPR050114">
    <property type="entry name" value="UPF0173_UPF0282_UlaG_hydrolase"/>
</dbReference>
<dbReference type="NCBIfam" id="NF008688">
    <property type="entry name" value="PRK11709.1"/>
    <property type="match status" value="1"/>
</dbReference>
<dbReference type="PANTHER" id="PTHR43546:SF9">
    <property type="entry name" value="L-ASCORBATE-6-PHOSPHATE LACTONASE ULAG-RELATED"/>
    <property type="match status" value="1"/>
</dbReference>
<dbReference type="PANTHER" id="PTHR43546">
    <property type="entry name" value="UPF0173 METAL-DEPENDENT HYDROLASE MJ1163-RELATED"/>
    <property type="match status" value="1"/>
</dbReference>
<dbReference type="Pfam" id="PF12706">
    <property type="entry name" value="Lactamase_B_2"/>
    <property type="match status" value="1"/>
</dbReference>
<dbReference type="SUPFAM" id="SSF56281">
    <property type="entry name" value="Metallo-hydrolase/oxidoreductase"/>
    <property type="match status" value="1"/>
</dbReference>
<name>ULAG_SALEP</name>